<name>SYR_SALTS</name>
<sequence length="577" mass="64275">MNIQALLSEKVSQAMIAAGAPADCEPQVRQSAKVQFGDYQANGMMAVAKKLGMAPRQLAEQVLTHLDLSGIASKVEIAGPGFINIFLEPAFLAEQVQQALASDRLGVSQPTRQTIVVDYSAPNVAKEMHVGHLRSTIIGDAAVRTLEFLGHHVIRANHVGDWGTQFGMLIAWLEKQQQENAGDMALADLEGFYRDAKKHYDEDEAFAERARNYVVKLQSGDTYFREMWRKLVDITMTQNQITYDRLNVTLTRDDVMGESLYNPMLPGIVADLKAKGLAVESEGATVVFLDEFKNKEGDPMGVIIQKKDGGYLYTTTDIACAKYRYETLHADRVLYYIDSRQHQHLMQAWTIVRKAGYVPDSVPLEHHMFGMMLGKDGKPFKTRAGGTVKLADLLDEALERARRLVAEKNPDMPADELEKLANAVGIGAVKYADLSKNRTTDYIFDWDNMLAFEGNTAPYMQYAYTRVLSVFRKANIDEQALASAPVIISEDREAQLAARLLQFEETLTVVAREGTPHVMCAYLYDVAGLFSGFYEHCPILSAENDAVRNSRLKLAQLTAKTLKLGLDTLGIETVERM</sequence>
<comment type="catalytic activity">
    <reaction>
        <text>tRNA(Arg) + L-arginine + ATP = L-arginyl-tRNA(Arg) + AMP + diphosphate</text>
        <dbReference type="Rhea" id="RHEA:20301"/>
        <dbReference type="Rhea" id="RHEA-COMP:9658"/>
        <dbReference type="Rhea" id="RHEA-COMP:9673"/>
        <dbReference type="ChEBI" id="CHEBI:30616"/>
        <dbReference type="ChEBI" id="CHEBI:32682"/>
        <dbReference type="ChEBI" id="CHEBI:33019"/>
        <dbReference type="ChEBI" id="CHEBI:78442"/>
        <dbReference type="ChEBI" id="CHEBI:78513"/>
        <dbReference type="ChEBI" id="CHEBI:456215"/>
        <dbReference type="EC" id="6.1.1.19"/>
    </reaction>
</comment>
<comment type="subunit">
    <text evidence="1">Monomer.</text>
</comment>
<comment type="subcellular location">
    <subcellularLocation>
        <location evidence="1">Cytoplasm</location>
    </subcellularLocation>
</comment>
<comment type="similarity">
    <text evidence="2">Belongs to the class-I aminoacyl-tRNA synthetase family.</text>
</comment>
<gene>
    <name type="primary">argS</name>
    <name type="ordered locus">SL1344_1844</name>
</gene>
<dbReference type="EC" id="6.1.1.19"/>
<dbReference type="EMBL" id="FQ312003">
    <property type="protein sequence ID" value="CBW17938.1"/>
    <property type="molecule type" value="Genomic_DNA"/>
</dbReference>
<dbReference type="EMBL" id="U62714">
    <property type="protein sequence ID" value="AAC44610.1"/>
    <property type="molecule type" value="Genomic_DNA"/>
</dbReference>
<dbReference type="RefSeq" id="WP_001025361.1">
    <property type="nucleotide sequence ID" value="NZ_QASL01000015.1"/>
</dbReference>
<dbReference type="SMR" id="E1WGF0"/>
<dbReference type="KEGG" id="sey:SL1344_1844"/>
<dbReference type="PATRIC" id="fig|216597.6.peg.2047"/>
<dbReference type="HOGENOM" id="CLU_006406_5_1_6"/>
<dbReference type="BioCyc" id="SENT216597:SL1344_RS09550-MONOMER"/>
<dbReference type="Proteomes" id="UP000008962">
    <property type="component" value="Chromosome"/>
</dbReference>
<dbReference type="GO" id="GO:0005737">
    <property type="term" value="C:cytoplasm"/>
    <property type="evidence" value="ECO:0007669"/>
    <property type="project" value="UniProtKB-SubCell"/>
</dbReference>
<dbReference type="GO" id="GO:0004814">
    <property type="term" value="F:arginine-tRNA ligase activity"/>
    <property type="evidence" value="ECO:0007669"/>
    <property type="project" value="UniProtKB-UniRule"/>
</dbReference>
<dbReference type="GO" id="GO:0005524">
    <property type="term" value="F:ATP binding"/>
    <property type="evidence" value="ECO:0007669"/>
    <property type="project" value="UniProtKB-UniRule"/>
</dbReference>
<dbReference type="GO" id="GO:0006420">
    <property type="term" value="P:arginyl-tRNA aminoacylation"/>
    <property type="evidence" value="ECO:0007669"/>
    <property type="project" value="UniProtKB-UniRule"/>
</dbReference>
<dbReference type="CDD" id="cd07956">
    <property type="entry name" value="Anticodon_Ia_Arg"/>
    <property type="match status" value="1"/>
</dbReference>
<dbReference type="CDD" id="cd00671">
    <property type="entry name" value="ArgRS_core"/>
    <property type="match status" value="1"/>
</dbReference>
<dbReference type="FunFam" id="1.10.730.10:FF:000001">
    <property type="entry name" value="Arginine--tRNA ligase"/>
    <property type="match status" value="1"/>
</dbReference>
<dbReference type="FunFam" id="3.30.1360.70:FF:000001">
    <property type="entry name" value="Arginine--tRNA ligase"/>
    <property type="match status" value="1"/>
</dbReference>
<dbReference type="FunFam" id="3.40.50.620:FF:000030">
    <property type="entry name" value="Arginine--tRNA ligase"/>
    <property type="match status" value="1"/>
</dbReference>
<dbReference type="Gene3D" id="3.30.1360.70">
    <property type="entry name" value="Arginyl tRNA synthetase N-terminal domain"/>
    <property type="match status" value="1"/>
</dbReference>
<dbReference type="Gene3D" id="3.40.50.620">
    <property type="entry name" value="HUPs"/>
    <property type="match status" value="1"/>
</dbReference>
<dbReference type="Gene3D" id="1.10.730.10">
    <property type="entry name" value="Isoleucyl-tRNA Synthetase, Domain 1"/>
    <property type="match status" value="1"/>
</dbReference>
<dbReference type="HAMAP" id="MF_00123">
    <property type="entry name" value="Arg_tRNA_synth"/>
    <property type="match status" value="1"/>
</dbReference>
<dbReference type="InterPro" id="IPR001412">
    <property type="entry name" value="aa-tRNA-synth_I_CS"/>
</dbReference>
<dbReference type="InterPro" id="IPR001278">
    <property type="entry name" value="Arg-tRNA-ligase"/>
</dbReference>
<dbReference type="InterPro" id="IPR005148">
    <property type="entry name" value="Arg-tRNA-synth_N"/>
</dbReference>
<dbReference type="InterPro" id="IPR036695">
    <property type="entry name" value="Arg-tRNA-synth_N_sf"/>
</dbReference>
<dbReference type="InterPro" id="IPR035684">
    <property type="entry name" value="ArgRS_core"/>
</dbReference>
<dbReference type="InterPro" id="IPR008909">
    <property type="entry name" value="DALR_anticod-bd"/>
</dbReference>
<dbReference type="InterPro" id="IPR014729">
    <property type="entry name" value="Rossmann-like_a/b/a_fold"/>
</dbReference>
<dbReference type="InterPro" id="IPR009080">
    <property type="entry name" value="tRNAsynth_Ia_anticodon-bd"/>
</dbReference>
<dbReference type="NCBIfam" id="TIGR00456">
    <property type="entry name" value="argS"/>
    <property type="match status" value="1"/>
</dbReference>
<dbReference type="PANTHER" id="PTHR11956:SF5">
    <property type="entry name" value="ARGININE--TRNA LIGASE, CYTOPLASMIC"/>
    <property type="match status" value="1"/>
</dbReference>
<dbReference type="PANTHER" id="PTHR11956">
    <property type="entry name" value="ARGINYL-TRNA SYNTHETASE"/>
    <property type="match status" value="1"/>
</dbReference>
<dbReference type="Pfam" id="PF03485">
    <property type="entry name" value="Arg_tRNA_synt_N"/>
    <property type="match status" value="1"/>
</dbReference>
<dbReference type="Pfam" id="PF05746">
    <property type="entry name" value="DALR_1"/>
    <property type="match status" value="1"/>
</dbReference>
<dbReference type="Pfam" id="PF00750">
    <property type="entry name" value="tRNA-synt_1d"/>
    <property type="match status" value="1"/>
</dbReference>
<dbReference type="PRINTS" id="PR01038">
    <property type="entry name" value="TRNASYNTHARG"/>
</dbReference>
<dbReference type="SMART" id="SM01016">
    <property type="entry name" value="Arg_tRNA_synt_N"/>
    <property type="match status" value="1"/>
</dbReference>
<dbReference type="SMART" id="SM00836">
    <property type="entry name" value="DALR_1"/>
    <property type="match status" value="1"/>
</dbReference>
<dbReference type="SUPFAM" id="SSF47323">
    <property type="entry name" value="Anticodon-binding domain of a subclass of class I aminoacyl-tRNA synthetases"/>
    <property type="match status" value="1"/>
</dbReference>
<dbReference type="SUPFAM" id="SSF55190">
    <property type="entry name" value="Arginyl-tRNA synthetase (ArgRS), N-terminal 'additional' domain"/>
    <property type="match status" value="1"/>
</dbReference>
<dbReference type="SUPFAM" id="SSF52374">
    <property type="entry name" value="Nucleotidylyl transferase"/>
    <property type="match status" value="1"/>
</dbReference>
<dbReference type="PROSITE" id="PS00178">
    <property type="entry name" value="AA_TRNA_LIGASE_I"/>
    <property type="match status" value="1"/>
</dbReference>
<reference key="1">
    <citation type="journal article" date="2012" name="Proc. Natl. Acad. Sci. U.S.A.">
        <title>The transcriptional landscape and small RNAs of Salmonella enterica serovar Typhimurium.</title>
        <authorList>
            <person name="Kroger C."/>
            <person name="Dillon S.C."/>
            <person name="Cameron A.D."/>
            <person name="Papenfort K."/>
            <person name="Sivasankaran S.K."/>
            <person name="Hokamp K."/>
            <person name="Chao Y."/>
            <person name="Sittka A."/>
            <person name="Hebrard M."/>
            <person name="Handler K."/>
            <person name="Colgan A."/>
            <person name="Leekitcharoenphon P."/>
            <person name="Langridge G.C."/>
            <person name="Lohan A.J."/>
            <person name="Loftus B."/>
            <person name="Lucchini S."/>
            <person name="Ussery D.W."/>
            <person name="Dorman C.J."/>
            <person name="Thomson N.R."/>
            <person name="Vogel J."/>
            <person name="Hinton J.C."/>
        </authorList>
    </citation>
    <scope>NUCLEOTIDE SEQUENCE [LARGE SCALE GENOMIC DNA]</scope>
    <source>
        <strain>SL1344</strain>
    </source>
</reference>
<reference key="2">
    <citation type="journal article" date="1996" name="Mol. Microbiol.">
        <title>Bacterial genetics by flow cytometry: rapid isolation of Salmonella typhimurium acid-inducible promoters by differential fluorescence induction.</title>
        <authorList>
            <person name="Valdivia R.H."/>
            <person name="Falkow S."/>
        </authorList>
    </citation>
    <scope>NUCLEOTIDE SEQUENCE [GENOMIC DNA] OF 491-577</scope>
    <source>
        <strain>SL1344</strain>
    </source>
</reference>
<proteinExistence type="inferred from homology"/>
<accession>E1WGF0</accession>
<accession>P74871</accession>
<protein>
    <recommendedName>
        <fullName>Arginine--tRNA ligase</fullName>
        <ecNumber>6.1.1.19</ecNumber>
    </recommendedName>
    <alternativeName>
        <fullName>Arginyl-tRNA synthetase</fullName>
        <shortName>ArgRS</shortName>
    </alternativeName>
</protein>
<evidence type="ECO:0000250" key="1"/>
<evidence type="ECO:0000305" key="2"/>
<feature type="chain" id="PRO_0000406087" description="Arginine--tRNA ligase">
    <location>
        <begin position="1"/>
        <end position="577"/>
    </location>
</feature>
<feature type="short sequence motif" description="'HIGH' region">
    <location>
        <begin position="122"/>
        <end position="132"/>
    </location>
</feature>
<feature type="sequence conflict" description="In Ref. 2; AAC44610." evidence="2" ref="2">
    <original>D</original>
    <variation>H</variation>
    <location>
        <position position="491"/>
    </location>
</feature>
<feature type="sequence conflict" description="In Ref. 2; AAC44610." evidence="2" ref="2">
    <original>A</original>
    <variation>D</variation>
    <location>
        <position position="498"/>
    </location>
</feature>
<feature type="sequence conflict" description="In Ref. 2; AAC44610." evidence="2" ref="2">
    <original>A</original>
    <variation>V</variation>
    <location>
        <position position="555"/>
    </location>
</feature>
<feature type="sequence conflict" description="In Ref. 2; AAC44610." evidence="2" ref="2">
    <original>L</original>
    <variation>S</variation>
    <location>
        <position position="569"/>
    </location>
</feature>
<feature type="sequence conflict" description="In Ref. 2; AAC44610." evidence="2" ref="2">
    <original>V</original>
    <variation>A</variation>
    <location>
        <position position="574"/>
    </location>
</feature>
<keyword id="KW-0030">Aminoacyl-tRNA synthetase</keyword>
<keyword id="KW-0067">ATP-binding</keyword>
<keyword id="KW-0963">Cytoplasm</keyword>
<keyword id="KW-0436">Ligase</keyword>
<keyword id="KW-0547">Nucleotide-binding</keyword>
<keyword id="KW-0648">Protein biosynthesis</keyword>
<organism>
    <name type="scientific">Salmonella typhimurium (strain SL1344)</name>
    <dbReference type="NCBI Taxonomy" id="216597"/>
    <lineage>
        <taxon>Bacteria</taxon>
        <taxon>Pseudomonadati</taxon>
        <taxon>Pseudomonadota</taxon>
        <taxon>Gammaproteobacteria</taxon>
        <taxon>Enterobacterales</taxon>
        <taxon>Enterobacteriaceae</taxon>
        <taxon>Salmonella</taxon>
    </lineage>
</organism>